<gene>
    <name type="primary">korA</name>
    <name type="ordered locus">MJ0276</name>
</gene>
<reference key="1">
    <citation type="journal article" date="1996" name="Science">
        <title>Complete genome sequence of the methanogenic archaeon, Methanococcus jannaschii.</title>
        <authorList>
            <person name="Bult C.J."/>
            <person name="White O."/>
            <person name="Olsen G.J."/>
            <person name="Zhou L."/>
            <person name="Fleischmann R.D."/>
            <person name="Sutton G.G."/>
            <person name="Blake J.A."/>
            <person name="FitzGerald L.M."/>
            <person name="Clayton R.A."/>
            <person name="Gocayne J.D."/>
            <person name="Kerlavage A.R."/>
            <person name="Dougherty B.A."/>
            <person name="Tomb J.-F."/>
            <person name="Adams M.D."/>
            <person name="Reich C.I."/>
            <person name="Overbeek R."/>
            <person name="Kirkness E.F."/>
            <person name="Weinstock K.G."/>
            <person name="Merrick J.M."/>
            <person name="Glodek A."/>
            <person name="Scott J.L."/>
            <person name="Geoghagen N.S.M."/>
            <person name="Weidman J.F."/>
            <person name="Fuhrmann J.L."/>
            <person name="Nguyen D."/>
            <person name="Utterback T.R."/>
            <person name="Kelley J.M."/>
            <person name="Peterson J.D."/>
            <person name="Sadow P.W."/>
            <person name="Hanna M.C."/>
            <person name="Cotton M.D."/>
            <person name="Roberts K.M."/>
            <person name="Hurst M.A."/>
            <person name="Kaine B.P."/>
            <person name="Borodovsky M."/>
            <person name="Klenk H.-P."/>
            <person name="Fraser C.M."/>
            <person name="Smith H.O."/>
            <person name="Woese C.R."/>
            <person name="Venter J.C."/>
        </authorList>
    </citation>
    <scope>NUCLEOTIDE SEQUENCE [LARGE SCALE GENOMIC DNA]</scope>
    <source>
        <strain>ATCC 43067 / DSM 2661 / JAL-1 / JCM 10045 / NBRC 100440</strain>
    </source>
</reference>
<proteinExistence type="inferred from homology"/>
<keyword id="KW-0560">Oxidoreductase</keyword>
<keyword id="KW-1185">Reference proteome</keyword>
<name>KORA_METJA</name>
<evidence type="ECO:0000250" key="1"/>
<accession>Q57724</accession>
<organism>
    <name type="scientific">Methanocaldococcus jannaschii (strain ATCC 43067 / DSM 2661 / JAL-1 / JCM 10045 / NBRC 100440)</name>
    <name type="common">Methanococcus jannaschii</name>
    <dbReference type="NCBI Taxonomy" id="243232"/>
    <lineage>
        <taxon>Archaea</taxon>
        <taxon>Methanobacteriati</taxon>
        <taxon>Methanobacteriota</taxon>
        <taxon>Methanomada group</taxon>
        <taxon>Methanococci</taxon>
        <taxon>Methanococcales</taxon>
        <taxon>Methanocaldococcaceae</taxon>
        <taxon>Methanocaldococcus</taxon>
    </lineage>
</organism>
<comment type="catalytic activity">
    <reaction>
        <text>2 oxidized [2Fe-2S]-[ferredoxin] + 2-oxoglutarate + CoA = succinyl-CoA + 2 reduced [2Fe-2S]-[ferredoxin] + CO2 + H(+)</text>
        <dbReference type="Rhea" id="RHEA:17297"/>
        <dbReference type="Rhea" id="RHEA-COMP:10000"/>
        <dbReference type="Rhea" id="RHEA-COMP:10001"/>
        <dbReference type="ChEBI" id="CHEBI:15378"/>
        <dbReference type="ChEBI" id="CHEBI:16526"/>
        <dbReference type="ChEBI" id="CHEBI:16810"/>
        <dbReference type="ChEBI" id="CHEBI:33737"/>
        <dbReference type="ChEBI" id="CHEBI:33738"/>
        <dbReference type="ChEBI" id="CHEBI:57287"/>
        <dbReference type="ChEBI" id="CHEBI:57292"/>
        <dbReference type="EC" id="1.2.7.3"/>
    </reaction>
</comment>
<comment type="subunit">
    <text evidence="1">Heterotetramer of the KorA, KorB, KorC and KorD subunits.</text>
</comment>
<sequence>MKVEFMQGNQACAKGAIKAGCRFFAGYPITPSTEIAEAMARELPKVGGYYIQMEDEIGSIAAVIGASWGGLKAMTATSGPGFSLMQENIGFAYMTETPCVVVDIQRGGPSTGQPTMASQGDMMQCRWGSHGDYEVIALAPSSVQEMYDFTIMAFNYAEKYRIPVFVMADEIVGHMREKVILHDNIEIINRKKPEEKPCKKPYPFDKLIPEMPVFGEGYNVHITGLTHDERGYPDVSPETHDKLVRRIVNKIRKNKDEIIKWEGENLDAEIVFVCYGSPSRTVKHAVRNLREKGLDVGYIRLITVYPFPDDLLKKLKAKKVVVPEMNLGQIYYEVERVCKKAEEVILVDKIGGELHRPEELERAVLG</sequence>
<dbReference type="EC" id="1.2.7.3"/>
<dbReference type="EMBL" id="L77117">
    <property type="protein sequence ID" value="AAB98264.1"/>
    <property type="molecule type" value="Genomic_DNA"/>
</dbReference>
<dbReference type="PIR" id="E64334">
    <property type="entry name" value="E64334"/>
</dbReference>
<dbReference type="RefSeq" id="WP_010869774.1">
    <property type="nucleotide sequence ID" value="NC_000909.1"/>
</dbReference>
<dbReference type="SMR" id="Q57724"/>
<dbReference type="FunCoup" id="Q57724">
    <property type="interactions" value="94"/>
</dbReference>
<dbReference type="STRING" id="243232.MJ_0276"/>
<dbReference type="PaxDb" id="243232-MJ_0276"/>
<dbReference type="EnsemblBacteria" id="AAB98264">
    <property type="protein sequence ID" value="AAB98264"/>
    <property type="gene ID" value="MJ_0276"/>
</dbReference>
<dbReference type="GeneID" id="1451131"/>
<dbReference type="KEGG" id="mja:MJ_0276"/>
<dbReference type="eggNOG" id="arCOG01607">
    <property type="taxonomic scope" value="Archaea"/>
</dbReference>
<dbReference type="HOGENOM" id="CLU_017038_0_1_2"/>
<dbReference type="InParanoid" id="Q57724"/>
<dbReference type="OrthoDB" id="31112at2157"/>
<dbReference type="PhylomeDB" id="Q57724"/>
<dbReference type="Proteomes" id="UP000000805">
    <property type="component" value="Chromosome"/>
</dbReference>
<dbReference type="GO" id="GO:0047553">
    <property type="term" value="F:2-oxoglutarate synthase activity"/>
    <property type="evidence" value="ECO:0007669"/>
    <property type="project" value="UniProtKB-EC"/>
</dbReference>
<dbReference type="GO" id="GO:0006082">
    <property type="term" value="P:organic acid metabolic process"/>
    <property type="evidence" value="ECO:0007669"/>
    <property type="project" value="UniProtKB-ARBA"/>
</dbReference>
<dbReference type="GO" id="GO:0006979">
    <property type="term" value="P:response to oxidative stress"/>
    <property type="evidence" value="ECO:0000318"/>
    <property type="project" value="GO_Central"/>
</dbReference>
<dbReference type="GO" id="GO:0044272">
    <property type="term" value="P:sulfur compound biosynthetic process"/>
    <property type="evidence" value="ECO:0007669"/>
    <property type="project" value="UniProtKB-ARBA"/>
</dbReference>
<dbReference type="CDD" id="cd07034">
    <property type="entry name" value="TPP_PYR_PFOR_IOR-alpha_like"/>
    <property type="match status" value="1"/>
</dbReference>
<dbReference type="FunFam" id="3.40.50.970:FF:000022">
    <property type="entry name" value="2-oxoglutarate ferredoxin oxidoreductase alpha subunit"/>
    <property type="match status" value="1"/>
</dbReference>
<dbReference type="FunFam" id="3.40.50.920:FF:000013">
    <property type="entry name" value="Ferredoxin oxidoreductase alpha subunit"/>
    <property type="match status" value="1"/>
</dbReference>
<dbReference type="Gene3D" id="3.40.50.920">
    <property type="match status" value="1"/>
</dbReference>
<dbReference type="Gene3D" id="3.40.50.970">
    <property type="match status" value="1"/>
</dbReference>
<dbReference type="InterPro" id="IPR033412">
    <property type="entry name" value="PFOR_II"/>
</dbReference>
<dbReference type="InterPro" id="IPR050722">
    <property type="entry name" value="Pyruvate:ferred/Flavod_OxRd"/>
</dbReference>
<dbReference type="InterPro" id="IPR002880">
    <property type="entry name" value="Pyrv_Fd/Flavodoxin_OxRdtase_N"/>
</dbReference>
<dbReference type="InterPro" id="IPR029061">
    <property type="entry name" value="THDP-binding"/>
</dbReference>
<dbReference type="InterPro" id="IPR009014">
    <property type="entry name" value="Transketo_C/PFOR_II"/>
</dbReference>
<dbReference type="NCBIfam" id="NF006412">
    <property type="entry name" value="PRK08659.1"/>
    <property type="match status" value="1"/>
</dbReference>
<dbReference type="PANTHER" id="PTHR32154:SF14">
    <property type="entry name" value="2-OXOGLUTARATE SYNTHASE SUBUNIT KORA"/>
    <property type="match status" value="1"/>
</dbReference>
<dbReference type="PANTHER" id="PTHR32154">
    <property type="entry name" value="PYRUVATE-FLAVODOXIN OXIDOREDUCTASE-RELATED"/>
    <property type="match status" value="1"/>
</dbReference>
<dbReference type="Pfam" id="PF17147">
    <property type="entry name" value="PFOR_II"/>
    <property type="match status" value="1"/>
</dbReference>
<dbReference type="Pfam" id="PF01855">
    <property type="entry name" value="POR_N"/>
    <property type="match status" value="1"/>
</dbReference>
<dbReference type="SUPFAM" id="SSF52518">
    <property type="entry name" value="Thiamin diphosphate-binding fold (THDP-binding)"/>
    <property type="match status" value="1"/>
</dbReference>
<dbReference type="SUPFAM" id="SSF52922">
    <property type="entry name" value="TK C-terminal domain-like"/>
    <property type="match status" value="1"/>
</dbReference>
<feature type="chain" id="PRO_0000099938" description="2-oxoglutarate synthase subunit KorA">
    <location>
        <begin position="1"/>
        <end position="366"/>
    </location>
</feature>
<protein>
    <recommendedName>
        <fullName>2-oxoglutarate synthase subunit KorA</fullName>
        <ecNumber>1.2.7.3</ecNumber>
    </recommendedName>
    <alternativeName>
        <fullName>2-ketoglutarate oxidoreductase alpha chain</fullName>
        <shortName>KOR</shortName>
    </alternativeName>
    <alternativeName>
        <fullName>2-oxoglutarate-ferredoxin oxidoreductase subunit alpha</fullName>
    </alternativeName>
</protein>